<keyword id="KW-0112">Calmodulin-binding</keyword>
<keyword id="KW-0968">Cytoplasmic vesicle</keyword>
<keyword id="KW-0472">Membrane</keyword>
<keyword id="KW-1185">Reference proteome</keyword>
<reference key="1">
    <citation type="submission" date="2004-06" db="EMBL/GenBank/DDBJ databases">
        <authorList>
            <consortium name="NIH - Xenopus Gene Collection (XGC) project"/>
        </authorList>
    </citation>
    <scope>NUCLEOTIDE SEQUENCE [LARGE SCALE MRNA]</scope>
    <source>
        <tissue>Eye</tissue>
    </source>
</reference>
<organism>
    <name type="scientific">Xenopus laevis</name>
    <name type="common">African clawed frog</name>
    <dbReference type="NCBI Taxonomy" id="8355"/>
    <lineage>
        <taxon>Eukaryota</taxon>
        <taxon>Metazoa</taxon>
        <taxon>Chordata</taxon>
        <taxon>Craniata</taxon>
        <taxon>Vertebrata</taxon>
        <taxon>Euteleostomi</taxon>
        <taxon>Amphibia</taxon>
        <taxon>Batrachia</taxon>
        <taxon>Anura</taxon>
        <taxon>Pipoidea</taxon>
        <taxon>Pipidae</taxon>
        <taxon>Xenopodinae</taxon>
        <taxon>Xenopus</taxon>
        <taxon>Xenopus</taxon>
    </lineage>
</organism>
<evidence type="ECO:0000250" key="1"/>
<evidence type="ECO:0000255" key="2">
    <source>
        <dbReference type="PROSITE-ProRule" id="PRU00159"/>
    </source>
</evidence>
<evidence type="ECO:0000256" key="3">
    <source>
        <dbReference type="SAM" id="MobiDB-lite"/>
    </source>
</evidence>
<evidence type="ECO:0000305" key="4"/>
<dbReference type="EMBL" id="BC074382">
    <property type="protein sequence ID" value="AAH74382.1"/>
    <property type="molecule type" value="mRNA"/>
</dbReference>
<dbReference type="RefSeq" id="NP_001086252.1">
    <property type="nucleotide sequence ID" value="NM_001092783.1"/>
</dbReference>
<dbReference type="SMR" id="Q6GLS4"/>
<dbReference type="GeneID" id="444681"/>
<dbReference type="KEGG" id="xla:444681"/>
<dbReference type="AGR" id="Xenbase:XB-GENE-943907"/>
<dbReference type="CTD" id="444681"/>
<dbReference type="Xenbase" id="XB-GENE-943907">
    <property type="gene designation" value="camkv.L"/>
</dbReference>
<dbReference type="OrthoDB" id="40902at2759"/>
<dbReference type="Proteomes" id="UP000186698">
    <property type="component" value="Chromosome 4L"/>
</dbReference>
<dbReference type="Bgee" id="444681">
    <property type="expression patterns" value="Expressed in brain and 3 other cell types or tissues"/>
</dbReference>
<dbReference type="GO" id="GO:0005737">
    <property type="term" value="C:cytoplasm"/>
    <property type="evidence" value="ECO:0000318"/>
    <property type="project" value="GO_Central"/>
</dbReference>
<dbReference type="GO" id="GO:0030659">
    <property type="term" value="C:cytoplasmic vesicle membrane"/>
    <property type="evidence" value="ECO:0007669"/>
    <property type="project" value="UniProtKB-SubCell"/>
</dbReference>
<dbReference type="GO" id="GO:0045202">
    <property type="term" value="C:synapse"/>
    <property type="evidence" value="ECO:0000318"/>
    <property type="project" value="GO_Central"/>
</dbReference>
<dbReference type="GO" id="GO:0005524">
    <property type="term" value="F:ATP binding"/>
    <property type="evidence" value="ECO:0007669"/>
    <property type="project" value="InterPro"/>
</dbReference>
<dbReference type="GO" id="GO:0004683">
    <property type="term" value="F:calcium/calmodulin-dependent protein kinase activity"/>
    <property type="evidence" value="ECO:0000318"/>
    <property type="project" value="GO_Central"/>
</dbReference>
<dbReference type="GO" id="GO:0005516">
    <property type="term" value="F:calmodulin binding"/>
    <property type="evidence" value="ECO:0000318"/>
    <property type="project" value="GO_Central"/>
</dbReference>
<dbReference type="GO" id="GO:0007165">
    <property type="term" value="P:signal transduction"/>
    <property type="evidence" value="ECO:0000318"/>
    <property type="project" value="GO_Central"/>
</dbReference>
<dbReference type="CDD" id="cd14088">
    <property type="entry name" value="STKc_CaMK_like"/>
    <property type="match status" value="1"/>
</dbReference>
<dbReference type="FunFam" id="1.10.510.10:FF:000188">
    <property type="entry name" value="CaM kinase-like vesicle-associated, like"/>
    <property type="match status" value="1"/>
</dbReference>
<dbReference type="FunFam" id="3.30.200.20:FF:000155">
    <property type="entry name" value="CaM kinase-like vesicle-associated, like"/>
    <property type="match status" value="1"/>
</dbReference>
<dbReference type="Gene3D" id="3.30.200.20">
    <property type="entry name" value="Phosphorylase Kinase, domain 1"/>
    <property type="match status" value="1"/>
</dbReference>
<dbReference type="Gene3D" id="1.10.510.10">
    <property type="entry name" value="Transferase(Phosphotransferase) domain 1"/>
    <property type="match status" value="1"/>
</dbReference>
<dbReference type="InterPro" id="IPR011009">
    <property type="entry name" value="Kinase-like_dom_sf"/>
</dbReference>
<dbReference type="InterPro" id="IPR000719">
    <property type="entry name" value="Prot_kinase_dom"/>
</dbReference>
<dbReference type="PANTHER" id="PTHR24347">
    <property type="entry name" value="SERINE/THREONINE-PROTEIN KINASE"/>
    <property type="match status" value="1"/>
</dbReference>
<dbReference type="Pfam" id="PF00069">
    <property type="entry name" value="Pkinase"/>
    <property type="match status" value="1"/>
</dbReference>
<dbReference type="SUPFAM" id="SSF56112">
    <property type="entry name" value="Protein kinase-like (PK-like)"/>
    <property type="match status" value="1"/>
</dbReference>
<dbReference type="PROSITE" id="PS50011">
    <property type="entry name" value="PROTEIN_KINASE_DOM"/>
    <property type="match status" value="1"/>
</dbReference>
<gene>
    <name type="primary">camkv</name>
</gene>
<name>CAMKV_XENLA</name>
<accession>Q6GLS4</accession>
<protein>
    <recommendedName>
        <fullName>CaM kinase-like vesicle-associated protein</fullName>
    </recommendedName>
</protein>
<feature type="chain" id="PRO_0000250099" description="CaM kinase-like vesicle-associated protein">
    <location>
        <begin position="1"/>
        <end position="377"/>
    </location>
</feature>
<feature type="domain" description="Protein kinase" evidence="2">
    <location>
        <begin position="24"/>
        <end position="287"/>
    </location>
</feature>
<feature type="region of interest" description="Disordered" evidence="3">
    <location>
        <begin position="324"/>
        <end position="377"/>
    </location>
</feature>
<feature type="compositionally biased region" description="Low complexity" evidence="3">
    <location>
        <begin position="347"/>
        <end position="362"/>
    </location>
</feature>
<feature type="compositionally biased region" description="Pro residues" evidence="3">
    <location>
        <begin position="368"/>
        <end position="377"/>
    </location>
</feature>
<comment type="function">
    <text>Does not appear to have detectable kinase activity.</text>
</comment>
<comment type="cofactor">
    <cofactor evidence="1">
        <name>Ca(2+)</name>
        <dbReference type="ChEBI" id="CHEBI:29108"/>
    </cofactor>
</comment>
<comment type="subunit">
    <text evidence="1">Interacts with calmodulin, in the presence of calcium.</text>
</comment>
<comment type="subcellular location">
    <subcellularLocation>
        <location>Cytoplasmic vesicle membrane</location>
        <topology>Peripheral membrane protein</topology>
    </subcellularLocation>
    <text evidence="1">May be associated with vesicular structures.</text>
</comment>
<comment type="domain">
    <text>The protein kinase domain is predicted to be catalytically inactive.</text>
</comment>
<comment type="similarity">
    <text evidence="4">Belongs to the protein kinase superfamily. CAMK Ser/Thr protein kinase family.</text>
</comment>
<proteinExistence type="evidence at transcript level"/>
<sequence>MPFGCVTLGDKKDYNHPTEVSDRYDLGQLIKTEEFCEVFRAKEKSSGKLYTCKRFLKRDGRKVRKAAKNEINILKMVKHHNILQLVDVFETRKEYFIFMELASGREVFDWILDQGYYSEKDTSNVIRQVLEAVAYLHSLCVVHRNLKLENLLYFNRMKNSKIVISDFHLAKVETNSLIKEPCGTPEYLAPEVVARQRYGRPVDCWAIGVIMYILLSGNPPFYDELEEEDYESHDKNLFRKILHGDYEFDSPYWDDISPAAKDLVTRLMEVEQDQRVTAADAISHEWISGNAASDKNIKDGVCAQIEKNFAKAKWKKAVRVTTMMKRLRAPEQTDPGTPSPSKDSDKTPSMATPAPSPANTPAEGAPSLPCPSPDTTG</sequence>